<gene>
    <name evidence="1" type="primary">gatD</name>
    <name type="ordered locus">M1627_1339</name>
</gene>
<organism>
    <name type="scientific">Saccharolobus islandicus (strain M.16.27)</name>
    <name type="common">Sulfolobus islandicus</name>
    <dbReference type="NCBI Taxonomy" id="427318"/>
    <lineage>
        <taxon>Archaea</taxon>
        <taxon>Thermoproteota</taxon>
        <taxon>Thermoprotei</taxon>
        <taxon>Sulfolobales</taxon>
        <taxon>Sulfolobaceae</taxon>
        <taxon>Saccharolobus</taxon>
    </lineage>
</organism>
<proteinExistence type="inferred from homology"/>
<sequence>MQENYKAKAYDILKNLNIEEGDLIEIKKGDLRIRGVLLPSYSKDERIFVIKLDNGYNIGISIDNISEIKLITKNSSKAQESERKEVSRNGAKSEIKIISTGGTIVSKVEYETGAVRPALTTEEIVQFLPEINEIAKVDAEVLFSILSENMKPEYWVKIAESVKKAFDEGNTGVVIAHGTDTMAYTASALAFSLRSLQGPVVLVGSQRSSDRPSSDSAINLLSAVTTAKYAPFGEVVVNMHADSSDTYALVHRGVKVRKMHSSRRDAFQSVNDKPLAKVLWKERKLVMLDKSYMSKKGETTLDAKFDNRAFLLYYYPGLDRDFLEHILTNTKIRGLIIAGTGLGHTSSDYVELFRKATKDGIFIGMTTQCLFGRVNMNVYTTGRQLLDAGVTPLEDMLPEVALVKLMWVLAHEQDLEKIRSLMISNLVGEINPRHTLDLFPRWSYE</sequence>
<protein>
    <recommendedName>
        <fullName evidence="1">Glutamyl-tRNA(Gln) amidotransferase subunit D</fullName>
        <shortName evidence="1">Glu-ADT subunit D</shortName>
        <ecNumber evidence="1">6.3.5.-</ecNumber>
    </recommendedName>
</protein>
<reference key="1">
    <citation type="journal article" date="2009" name="Proc. Natl. Acad. Sci. U.S.A.">
        <title>Biogeography of the Sulfolobus islandicus pan-genome.</title>
        <authorList>
            <person name="Reno M.L."/>
            <person name="Held N.L."/>
            <person name="Fields C.J."/>
            <person name="Burke P.V."/>
            <person name="Whitaker R.J."/>
        </authorList>
    </citation>
    <scope>NUCLEOTIDE SEQUENCE [LARGE SCALE GENOMIC DNA]</scope>
    <source>
        <strain>M.16.27</strain>
    </source>
</reference>
<name>GATD_SACI3</name>
<evidence type="ECO:0000255" key="1">
    <source>
        <dbReference type="HAMAP-Rule" id="MF_00586"/>
    </source>
</evidence>
<evidence type="ECO:0000255" key="2">
    <source>
        <dbReference type="PROSITE-ProRule" id="PRU01068"/>
    </source>
</evidence>
<comment type="function">
    <text evidence="1">Allows the formation of correctly charged Gln-tRNA(Gln) through the transamidation of misacylated Glu-tRNA(Gln) in organisms which lack glutaminyl-tRNA synthetase. The reaction takes place in the presence of glutamine and ATP through an activated gamma-phospho-Glu-tRNA(Gln). The GatDE system is specific for glutamate and does not act on aspartate.</text>
</comment>
<comment type="catalytic activity">
    <reaction evidence="1">
        <text>L-glutamyl-tRNA(Gln) + L-glutamine + ATP + H2O = L-glutaminyl-tRNA(Gln) + L-glutamate + ADP + phosphate + H(+)</text>
        <dbReference type="Rhea" id="RHEA:17521"/>
        <dbReference type="Rhea" id="RHEA-COMP:9681"/>
        <dbReference type="Rhea" id="RHEA-COMP:9684"/>
        <dbReference type="ChEBI" id="CHEBI:15377"/>
        <dbReference type="ChEBI" id="CHEBI:15378"/>
        <dbReference type="ChEBI" id="CHEBI:29985"/>
        <dbReference type="ChEBI" id="CHEBI:30616"/>
        <dbReference type="ChEBI" id="CHEBI:43474"/>
        <dbReference type="ChEBI" id="CHEBI:58359"/>
        <dbReference type="ChEBI" id="CHEBI:78520"/>
        <dbReference type="ChEBI" id="CHEBI:78521"/>
        <dbReference type="ChEBI" id="CHEBI:456216"/>
    </reaction>
</comment>
<comment type="subunit">
    <text evidence="1">Heterodimer of GatD and GatE.</text>
</comment>
<comment type="similarity">
    <text evidence="1">Belongs to the asparaginase 1 family. GatD subfamily.</text>
</comment>
<keyword id="KW-0067">ATP-binding</keyword>
<keyword id="KW-0436">Ligase</keyword>
<keyword id="KW-0547">Nucleotide-binding</keyword>
<keyword id="KW-0648">Protein biosynthesis</keyword>
<dbReference type="EC" id="6.3.5.-" evidence="1"/>
<dbReference type="EMBL" id="CP001401">
    <property type="protein sequence ID" value="ACP55222.1"/>
    <property type="molecule type" value="Genomic_DNA"/>
</dbReference>
<dbReference type="RefSeq" id="WP_012718802.1">
    <property type="nucleotide sequence ID" value="NC_012632.1"/>
</dbReference>
<dbReference type="SMR" id="C3N5E7"/>
<dbReference type="GeneID" id="84055792"/>
<dbReference type="KEGG" id="sim:M1627_1339"/>
<dbReference type="HOGENOM" id="CLU_019134_2_1_2"/>
<dbReference type="Proteomes" id="UP000002307">
    <property type="component" value="Chromosome"/>
</dbReference>
<dbReference type="GO" id="GO:0004067">
    <property type="term" value="F:asparaginase activity"/>
    <property type="evidence" value="ECO:0007669"/>
    <property type="project" value="InterPro"/>
</dbReference>
<dbReference type="GO" id="GO:0005524">
    <property type="term" value="F:ATP binding"/>
    <property type="evidence" value="ECO:0007669"/>
    <property type="project" value="UniProtKB-KW"/>
</dbReference>
<dbReference type="GO" id="GO:0050567">
    <property type="term" value="F:glutaminyl-tRNA synthase (glutamine-hydrolyzing) activity"/>
    <property type="evidence" value="ECO:0007669"/>
    <property type="project" value="UniProtKB-UniRule"/>
</dbReference>
<dbReference type="GO" id="GO:0006520">
    <property type="term" value="P:amino acid metabolic process"/>
    <property type="evidence" value="ECO:0007669"/>
    <property type="project" value="InterPro"/>
</dbReference>
<dbReference type="GO" id="GO:0006450">
    <property type="term" value="P:regulation of translational fidelity"/>
    <property type="evidence" value="ECO:0007669"/>
    <property type="project" value="InterPro"/>
</dbReference>
<dbReference type="GO" id="GO:0006412">
    <property type="term" value="P:translation"/>
    <property type="evidence" value="ECO:0007669"/>
    <property type="project" value="UniProtKB-UniRule"/>
</dbReference>
<dbReference type="CDD" id="cd08962">
    <property type="entry name" value="GatD"/>
    <property type="match status" value="1"/>
</dbReference>
<dbReference type="Gene3D" id="2.30.30.520">
    <property type="match status" value="1"/>
</dbReference>
<dbReference type="Gene3D" id="3.40.50.40">
    <property type="match status" value="1"/>
</dbReference>
<dbReference type="Gene3D" id="3.40.50.1170">
    <property type="entry name" value="L-asparaginase, N-terminal domain"/>
    <property type="match status" value="1"/>
</dbReference>
<dbReference type="HAMAP" id="MF_00586">
    <property type="entry name" value="GatD"/>
    <property type="match status" value="1"/>
</dbReference>
<dbReference type="InterPro" id="IPR006033">
    <property type="entry name" value="AsnA_fam"/>
</dbReference>
<dbReference type="InterPro" id="IPR036152">
    <property type="entry name" value="Asp/glu_Ase-like_sf"/>
</dbReference>
<dbReference type="InterPro" id="IPR006034">
    <property type="entry name" value="Asparaginase/glutaminase-like"/>
</dbReference>
<dbReference type="InterPro" id="IPR027475">
    <property type="entry name" value="Asparaginase/glutaminase_AS2"/>
</dbReference>
<dbReference type="InterPro" id="IPR040919">
    <property type="entry name" value="Asparaginase_C"/>
</dbReference>
<dbReference type="InterPro" id="IPR011878">
    <property type="entry name" value="GatD"/>
</dbReference>
<dbReference type="InterPro" id="IPR040918">
    <property type="entry name" value="GatD_N"/>
</dbReference>
<dbReference type="InterPro" id="IPR037222">
    <property type="entry name" value="GatD_N_sf"/>
</dbReference>
<dbReference type="InterPro" id="IPR027473">
    <property type="entry name" value="L-asparaginase_C"/>
</dbReference>
<dbReference type="InterPro" id="IPR027474">
    <property type="entry name" value="L-asparaginase_N"/>
</dbReference>
<dbReference type="InterPro" id="IPR037152">
    <property type="entry name" value="L-asparaginase_N_sf"/>
</dbReference>
<dbReference type="NCBIfam" id="TIGR00519">
    <property type="entry name" value="asnASE_I"/>
    <property type="match status" value="1"/>
</dbReference>
<dbReference type="NCBIfam" id="TIGR02153">
    <property type="entry name" value="gatD_arch"/>
    <property type="match status" value="1"/>
</dbReference>
<dbReference type="NCBIfam" id="NF003217">
    <property type="entry name" value="PRK04183.1"/>
    <property type="match status" value="1"/>
</dbReference>
<dbReference type="PANTHER" id="PTHR11707:SF28">
    <property type="entry name" value="60 KDA LYSOPHOSPHOLIPASE"/>
    <property type="match status" value="1"/>
</dbReference>
<dbReference type="PANTHER" id="PTHR11707">
    <property type="entry name" value="L-ASPARAGINASE"/>
    <property type="match status" value="1"/>
</dbReference>
<dbReference type="Pfam" id="PF00710">
    <property type="entry name" value="Asparaginase"/>
    <property type="match status" value="1"/>
</dbReference>
<dbReference type="Pfam" id="PF17763">
    <property type="entry name" value="Asparaginase_C"/>
    <property type="match status" value="1"/>
</dbReference>
<dbReference type="Pfam" id="PF18195">
    <property type="entry name" value="GatD_N"/>
    <property type="match status" value="1"/>
</dbReference>
<dbReference type="PIRSF" id="PIRSF500175">
    <property type="entry name" value="Glu_ADT_D"/>
    <property type="match status" value="1"/>
</dbReference>
<dbReference type="PIRSF" id="PIRSF001220">
    <property type="entry name" value="L-ASNase_gatD"/>
    <property type="match status" value="1"/>
</dbReference>
<dbReference type="PRINTS" id="PR00139">
    <property type="entry name" value="ASNGLNASE"/>
</dbReference>
<dbReference type="SMART" id="SM00870">
    <property type="entry name" value="Asparaginase"/>
    <property type="match status" value="1"/>
</dbReference>
<dbReference type="SUPFAM" id="SSF141300">
    <property type="entry name" value="GatD N-terminal domain-like"/>
    <property type="match status" value="1"/>
</dbReference>
<dbReference type="SUPFAM" id="SSF53774">
    <property type="entry name" value="Glutaminase/Asparaginase"/>
    <property type="match status" value="1"/>
</dbReference>
<dbReference type="PROSITE" id="PS00917">
    <property type="entry name" value="ASN_GLN_ASE_2"/>
    <property type="match status" value="1"/>
</dbReference>
<dbReference type="PROSITE" id="PS51732">
    <property type="entry name" value="ASN_GLN_ASE_3"/>
    <property type="match status" value="1"/>
</dbReference>
<accession>C3N5E7</accession>
<feature type="chain" id="PRO_1000212149" description="Glutamyl-tRNA(Gln) amidotransferase subunit D">
    <location>
        <begin position="1"/>
        <end position="445"/>
    </location>
</feature>
<feature type="domain" description="Asparaginase/glutaminase" evidence="2">
    <location>
        <begin position="93"/>
        <end position="425"/>
    </location>
</feature>
<feature type="active site" evidence="1">
    <location>
        <position position="103"/>
    </location>
</feature>
<feature type="active site" evidence="1">
    <location>
        <position position="179"/>
    </location>
</feature>
<feature type="active site" evidence="1">
    <location>
        <position position="180"/>
    </location>
</feature>
<feature type="active site" evidence="1">
    <location>
        <position position="258"/>
    </location>
</feature>